<organism>
    <name type="scientific">Acanthamoeba polyphaga mimivirus</name>
    <name type="common">APMV</name>
    <dbReference type="NCBI Taxonomy" id="212035"/>
    <lineage>
        <taxon>Viruses</taxon>
        <taxon>Varidnaviria</taxon>
        <taxon>Bamfordvirae</taxon>
        <taxon>Nucleocytoviricota</taxon>
        <taxon>Megaviricetes</taxon>
        <taxon>Imitervirales</taxon>
        <taxon>Mimiviridae</taxon>
        <taxon>Megamimivirinae</taxon>
        <taxon>Mimivirus</taxon>
        <taxon>Mimivirus bradfordmassiliense</taxon>
    </lineage>
</organism>
<name>YL171_MIMIV</name>
<sequence>MDERIIAKLVETFSLSQLLEIYDSQSCISFDNHHVLSQQESSVQVDDNFQIEPILKKYNIRPYPNLTNIPDSLHKIHILQEYCYYLRDDMLDSLQHMINVDDADFVAKYGSKSMEYQYHQIRKYMLEEILENVKHELNFLNSKCII</sequence>
<protein>
    <recommendedName>
        <fullName>Uncharacterized protein L171</fullName>
    </recommendedName>
</protein>
<dbReference type="EMBL" id="AY653733">
    <property type="protein sequence ID" value="AAV50445.1"/>
    <property type="molecule type" value="Genomic_DNA"/>
</dbReference>
<dbReference type="KEGG" id="vg:9924771"/>
<dbReference type="Proteomes" id="UP000001134">
    <property type="component" value="Genome"/>
</dbReference>
<proteinExistence type="predicted"/>
<organismHost>
    <name type="scientific">Acanthamoeba polyphaga</name>
    <name type="common">Amoeba</name>
    <dbReference type="NCBI Taxonomy" id="5757"/>
</organismHost>
<feature type="chain" id="PRO_0000253229" description="Uncharacterized protein L171">
    <location>
        <begin position="1"/>
        <end position="146"/>
    </location>
</feature>
<accession>Q5UPM9</accession>
<keyword id="KW-1185">Reference proteome</keyword>
<gene>
    <name type="ordered locus">MIMI_L171</name>
</gene>
<reference key="1">
    <citation type="journal article" date="2004" name="Science">
        <title>The 1.2-megabase genome sequence of Mimivirus.</title>
        <authorList>
            <person name="Raoult D."/>
            <person name="Audic S."/>
            <person name="Robert C."/>
            <person name="Abergel C."/>
            <person name="Renesto P."/>
            <person name="Ogata H."/>
            <person name="La Scola B."/>
            <person name="Susan M."/>
            <person name="Claverie J.-M."/>
        </authorList>
    </citation>
    <scope>NUCLEOTIDE SEQUENCE [LARGE SCALE GENOMIC DNA]</scope>
    <source>
        <strain>Rowbotham-Bradford</strain>
    </source>
</reference>